<dbReference type="EC" id="6.3.1.21" evidence="1"/>
<dbReference type="EMBL" id="CP000609">
    <property type="protein sequence ID" value="ABO35852.1"/>
    <property type="molecule type" value="Genomic_DNA"/>
</dbReference>
<dbReference type="RefSeq" id="WP_011869299.1">
    <property type="nucleotide sequence ID" value="NC_009135.1"/>
</dbReference>
<dbReference type="SMR" id="A4G068"/>
<dbReference type="STRING" id="402880.MmarC5_1555"/>
<dbReference type="GeneID" id="4929109"/>
<dbReference type="KEGG" id="mmq:MmarC5_1555"/>
<dbReference type="eggNOG" id="arCOG01598">
    <property type="taxonomic scope" value="Archaea"/>
</dbReference>
<dbReference type="HOGENOM" id="CLU_011534_1_3_2"/>
<dbReference type="OrthoDB" id="9299at2157"/>
<dbReference type="UniPathway" id="UPA00074">
    <property type="reaction ID" value="UER00127"/>
</dbReference>
<dbReference type="Proteomes" id="UP000000253">
    <property type="component" value="Chromosome"/>
</dbReference>
<dbReference type="GO" id="GO:0005829">
    <property type="term" value="C:cytosol"/>
    <property type="evidence" value="ECO:0007669"/>
    <property type="project" value="TreeGrafter"/>
</dbReference>
<dbReference type="GO" id="GO:0005524">
    <property type="term" value="F:ATP binding"/>
    <property type="evidence" value="ECO:0007669"/>
    <property type="project" value="UniProtKB-UniRule"/>
</dbReference>
<dbReference type="GO" id="GO:0000287">
    <property type="term" value="F:magnesium ion binding"/>
    <property type="evidence" value="ECO:0007669"/>
    <property type="project" value="InterPro"/>
</dbReference>
<dbReference type="GO" id="GO:0043815">
    <property type="term" value="F:phosphoribosylglycinamide formyltransferase 2 activity"/>
    <property type="evidence" value="ECO:0007669"/>
    <property type="project" value="UniProtKB-UniRule"/>
</dbReference>
<dbReference type="GO" id="GO:0004644">
    <property type="term" value="F:phosphoribosylglycinamide formyltransferase activity"/>
    <property type="evidence" value="ECO:0007669"/>
    <property type="project" value="InterPro"/>
</dbReference>
<dbReference type="GO" id="GO:0006189">
    <property type="term" value="P:'de novo' IMP biosynthetic process"/>
    <property type="evidence" value="ECO:0007669"/>
    <property type="project" value="UniProtKB-UniRule"/>
</dbReference>
<dbReference type="FunFam" id="3.40.50.20:FF:000007">
    <property type="entry name" value="Formate-dependent phosphoribosylglycinamide formyltransferase"/>
    <property type="match status" value="1"/>
</dbReference>
<dbReference type="Gene3D" id="3.40.50.20">
    <property type="match status" value="1"/>
</dbReference>
<dbReference type="Gene3D" id="3.30.1490.20">
    <property type="entry name" value="ATP-grasp fold, A domain"/>
    <property type="match status" value="1"/>
</dbReference>
<dbReference type="Gene3D" id="3.30.470.20">
    <property type="entry name" value="ATP-grasp fold, B domain"/>
    <property type="match status" value="1"/>
</dbReference>
<dbReference type="HAMAP" id="MF_01643">
    <property type="entry name" value="PurT"/>
    <property type="match status" value="1"/>
</dbReference>
<dbReference type="InterPro" id="IPR011761">
    <property type="entry name" value="ATP-grasp"/>
</dbReference>
<dbReference type="InterPro" id="IPR003135">
    <property type="entry name" value="ATP-grasp_carboxylate-amine"/>
</dbReference>
<dbReference type="InterPro" id="IPR013815">
    <property type="entry name" value="ATP_grasp_subdomain_1"/>
</dbReference>
<dbReference type="InterPro" id="IPR016185">
    <property type="entry name" value="PreATP-grasp_dom_sf"/>
</dbReference>
<dbReference type="InterPro" id="IPR005862">
    <property type="entry name" value="PurT"/>
</dbReference>
<dbReference type="InterPro" id="IPR054350">
    <property type="entry name" value="PurT/PurK_preATP-grasp"/>
</dbReference>
<dbReference type="InterPro" id="IPR048740">
    <property type="entry name" value="PurT_C"/>
</dbReference>
<dbReference type="InterPro" id="IPR011054">
    <property type="entry name" value="Rudment_hybrid_motif"/>
</dbReference>
<dbReference type="NCBIfam" id="NF006766">
    <property type="entry name" value="PRK09288.1"/>
    <property type="match status" value="1"/>
</dbReference>
<dbReference type="NCBIfam" id="TIGR01142">
    <property type="entry name" value="purT"/>
    <property type="match status" value="1"/>
</dbReference>
<dbReference type="PANTHER" id="PTHR43055">
    <property type="entry name" value="FORMATE-DEPENDENT PHOSPHORIBOSYLGLYCINAMIDE FORMYLTRANSFERASE"/>
    <property type="match status" value="1"/>
</dbReference>
<dbReference type="PANTHER" id="PTHR43055:SF1">
    <property type="entry name" value="FORMATE-DEPENDENT PHOSPHORIBOSYLGLYCINAMIDE FORMYLTRANSFERASE"/>
    <property type="match status" value="1"/>
</dbReference>
<dbReference type="Pfam" id="PF02222">
    <property type="entry name" value="ATP-grasp"/>
    <property type="match status" value="1"/>
</dbReference>
<dbReference type="Pfam" id="PF21244">
    <property type="entry name" value="PurT_C"/>
    <property type="match status" value="1"/>
</dbReference>
<dbReference type="Pfam" id="PF22660">
    <property type="entry name" value="RS_preATP-grasp-like"/>
    <property type="match status" value="1"/>
</dbReference>
<dbReference type="SUPFAM" id="SSF56059">
    <property type="entry name" value="Glutathione synthetase ATP-binding domain-like"/>
    <property type="match status" value="1"/>
</dbReference>
<dbReference type="SUPFAM" id="SSF52440">
    <property type="entry name" value="PreATP-grasp domain"/>
    <property type="match status" value="1"/>
</dbReference>
<dbReference type="SUPFAM" id="SSF51246">
    <property type="entry name" value="Rudiment single hybrid motif"/>
    <property type="match status" value="1"/>
</dbReference>
<dbReference type="PROSITE" id="PS50975">
    <property type="entry name" value="ATP_GRASP"/>
    <property type="match status" value="1"/>
</dbReference>
<accession>A4G068</accession>
<gene>
    <name evidence="1" type="primary">purT</name>
    <name type="ordered locus">MmarC5_1555</name>
</gene>
<feature type="chain" id="PRO_0000319280" description="Formate-dependent phosphoribosylglycinamide formyltransferase">
    <location>
        <begin position="1"/>
        <end position="388"/>
    </location>
</feature>
<feature type="domain" description="ATP-grasp" evidence="1">
    <location>
        <begin position="117"/>
        <end position="306"/>
    </location>
</feature>
<feature type="binding site" evidence="1">
    <location>
        <begin position="20"/>
        <end position="21"/>
    </location>
    <ligand>
        <name>N(1)-(5-phospho-beta-D-ribosyl)glycinamide</name>
        <dbReference type="ChEBI" id="CHEBI:143788"/>
    </ligand>
</feature>
<feature type="binding site" evidence="1">
    <location>
        <position position="80"/>
    </location>
    <ligand>
        <name>N(1)-(5-phospho-beta-D-ribosyl)glycinamide</name>
        <dbReference type="ChEBI" id="CHEBI:143788"/>
    </ligand>
</feature>
<feature type="binding site" evidence="1">
    <location>
        <position position="112"/>
    </location>
    <ligand>
        <name>ATP</name>
        <dbReference type="ChEBI" id="CHEBI:30616"/>
    </ligand>
</feature>
<feature type="binding site" evidence="1">
    <location>
        <position position="153"/>
    </location>
    <ligand>
        <name>ATP</name>
        <dbReference type="ChEBI" id="CHEBI:30616"/>
    </ligand>
</feature>
<feature type="binding site" evidence="1">
    <location>
        <begin position="158"/>
        <end position="163"/>
    </location>
    <ligand>
        <name>ATP</name>
        <dbReference type="ChEBI" id="CHEBI:30616"/>
    </ligand>
</feature>
<feature type="binding site" evidence="1">
    <location>
        <begin position="193"/>
        <end position="196"/>
    </location>
    <ligand>
        <name>ATP</name>
        <dbReference type="ChEBI" id="CHEBI:30616"/>
    </ligand>
</feature>
<feature type="binding site" evidence="1">
    <location>
        <position position="201"/>
    </location>
    <ligand>
        <name>ATP</name>
        <dbReference type="ChEBI" id="CHEBI:30616"/>
    </ligand>
</feature>
<feature type="binding site" evidence="1">
    <location>
        <position position="265"/>
    </location>
    <ligand>
        <name>Mg(2+)</name>
        <dbReference type="ChEBI" id="CHEBI:18420"/>
    </ligand>
</feature>
<feature type="binding site" evidence="1">
    <location>
        <position position="277"/>
    </location>
    <ligand>
        <name>Mg(2+)</name>
        <dbReference type="ChEBI" id="CHEBI:18420"/>
    </ligand>
</feature>
<feature type="binding site" evidence="1">
    <location>
        <position position="284"/>
    </location>
    <ligand>
        <name>N(1)-(5-phospho-beta-D-ribosyl)glycinamide</name>
        <dbReference type="ChEBI" id="CHEBI:143788"/>
    </ligand>
</feature>
<feature type="binding site" evidence="1">
    <location>
        <position position="352"/>
    </location>
    <ligand>
        <name>N(1)-(5-phospho-beta-D-ribosyl)glycinamide</name>
        <dbReference type="ChEBI" id="CHEBI:143788"/>
    </ligand>
</feature>
<feature type="binding site" evidence="1">
    <location>
        <begin position="359"/>
        <end position="360"/>
    </location>
    <ligand>
        <name>N(1)-(5-phospho-beta-D-ribosyl)glycinamide</name>
        <dbReference type="ChEBI" id="CHEBI:143788"/>
    </ligand>
</feature>
<keyword id="KW-0067">ATP-binding</keyword>
<keyword id="KW-0436">Ligase</keyword>
<keyword id="KW-0460">Magnesium</keyword>
<keyword id="KW-0479">Metal-binding</keyword>
<keyword id="KW-0547">Nucleotide-binding</keyword>
<keyword id="KW-0658">Purine biosynthesis</keyword>
<sequence length="388" mass="43058">MVGTPLFSNAKKILLLGSGELGKEVIIEAQRFGVECIAVDSYENAPAMQVAHRFHVIDMKDAGALREVIEREKPDLIVPEIEAINTDTLKEMETEGYHVVPTANATKLTMDREGIRRLAFEKLGLRTAKYEFAENLEELKEAVQRIGIPCIIKPIMSSSGKGQSTIKSEGDIEKSWDYAKSAARGIGTKVIVEEFIKFDYEITLLTARTAEGTRFCEPIGHIQIDGDYHESWQPHPMCAPTKAKAQEMAKKITDELGGYGIFGVELFVLDDEVIFSEVSPRPHDTGMVTMVTQKMSEFEIHARAILGLPVNVDILFPGASHVIKSEILKWAPEYEIHEASKVKDTKIRLFGKPIAKVGRRMGVALAVSDNVTKARENAEKAAHLVNIK</sequence>
<organism>
    <name type="scientific">Methanococcus maripaludis (strain C5 / ATCC BAA-1333)</name>
    <dbReference type="NCBI Taxonomy" id="402880"/>
    <lineage>
        <taxon>Archaea</taxon>
        <taxon>Methanobacteriati</taxon>
        <taxon>Methanobacteriota</taxon>
        <taxon>Methanomada group</taxon>
        <taxon>Methanococci</taxon>
        <taxon>Methanococcales</taxon>
        <taxon>Methanococcaceae</taxon>
        <taxon>Methanococcus</taxon>
    </lineage>
</organism>
<reference key="1">
    <citation type="submission" date="2007-03" db="EMBL/GenBank/DDBJ databases">
        <title>Complete sequence of chromosome of Methanococcus maripaludis C5.</title>
        <authorList>
            <consortium name="US DOE Joint Genome Institute"/>
            <person name="Copeland A."/>
            <person name="Lucas S."/>
            <person name="Lapidus A."/>
            <person name="Barry K."/>
            <person name="Glavina del Rio T."/>
            <person name="Dalin E."/>
            <person name="Tice H."/>
            <person name="Pitluck S."/>
            <person name="Chertkov O."/>
            <person name="Brettin T."/>
            <person name="Bruce D."/>
            <person name="Han C."/>
            <person name="Detter J.C."/>
            <person name="Schmutz J."/>
            <person name="Larimer F."/>
            <person name="Land M."/>
            <person name="Hauser L."/>
            <person name="Kyrpides N."/>
            <person name="Mikhailova N."/>
            <person name="Sieprawska-Lupa M."/>
            <person name="Whitman W.B."/>
            <person name="Richardson P."/>
        </authorList>
    </citation>
    <scope>NUCLEOTIDE SEQUENCE [LARGE SCALE GENOMIC DNA]</scope>
    <source>
        <strain>C5 / ATCC BAA-1333</strain>
    </source>
</reference>
<protein>
    <recommendedName>
        <fullName evidence="1">Formate-dependent phosphoribosylglycinamide formyltransferase</fullName>
        <ecNumber evidence="1">6.3.1.21</ecNumber>
    </recommendedName>
    <alternativeName>
        <fullName evidence="1">5'-phosphoribosylglycinamide transformylase 2</fullName>
    </alternativeName>
    <alternativeName>
        <fullName evidence="1">Formate-dependent GAR transformylase</fullName>
    </alternativeName>
    <alternativeName>
        <fullName evidence="1">GAR transformylase 2</fullName>
        <shortName evidence="1">GART 2</shortName>
    </alternativeName>
    <alternativeName>
        <fullName evidence="1">Non-folate glycinamide ribonucleotide transformylase</fullName>
    </alternativeName>
    <alternativeName>
        <fullName evidence="1">Phosphoribosylglycinamide formyltransferase 2</fullName>
    </alternativeName>
</protein>
<evidence type="ECO:0000255" key="1">
    <source>
        <dbReference type="HAMAP-Rule" id="MF_01643"/>
    </source>
</evidence>
<name>PURT_METM5</name>
<comment type="function">
    <text evidence="1">Involved in the de novo purine biosynthesis. Catalyzes the transfer of formate to 5-phospho-ribosyl-glycinamide (GAR), producing 5-phospho-ribosyl-N-formylglycinamide (FGAR). Formate is provided by PurU via hydrolysis of 10-formyl-tetrahydrofolate.</text>
</comment>
<comment type="catalytic activity">
    <reaction evidence="1">
        <text>N(1)-(5-phospho-beta-D-ribosyl)glycinamide + formate + ATP = N(2)-formyl-N(1)-(5-phospho-beta-D-ribosyl)glycinamide + ADP + phosphate + H(+)</text>
        <dbReference type="Rhea" id="RHEA:24829"/>
        <dbReference type="ChEBI" id="CHEBI:15378"/>
        <dbReference type="ChEBI" id="CHEBI:15740"/>
        <dbReference type="ChEBI" id="CHEBI:30616"/>
        <dbReference type="ChEBI" id="CHEBI:43474"/>
        <dbReference type="ChEBI" id="CHEBI:143788"/>
        <dbReference type="ChEBI" id="CHEBI:147286"/>
        <dbReference type="ChEBI" id="CHEBI:456216"/>
        <dbReference type="EC" id="6.3.1.21"/>
    </reaction>
    <physiologicalReaction direction="left-to-right" evidence="1">
        <dbReference type="Rhea" id="RHEA:24830"/>
    </physiologicalReaction>
</comment>
<comment type="pathway">
    <text evidence="1">Purine metabolism; IMP biosynthesis via de novo pathway; N(2)-formyl-N(1)-(5-phospho-D-ribosyl)glycinamide from N(1)-(5-phospho-D-ribosyl)glycinamide (formate route): step 1/1.</text>
</comment>
<comment type="subunit">
    <text evidence="1">Homodimer.</text>
</comment>
<comment type="similarity">
    <text evidence="1">Belongs to the PurK/PurT family.</text>
</comment>
<proteinExistence type="inferred from homology"/>